<keyword id="KW-0010">Activator</keyword>
<keyword id="KW-0067">ATP-binding</keyword>
<keyword id="KW-0119">Carbohydrate metabolism</keyword>
<keyword id="KW-0238">DNA-binding</keyword>
<keyword id="KW-0547">Nucleotide-binding</keyword>
<keyword id="KW-1185">Reference proteome</keyword>
<keyword id="KW-0804">Transcription</keyword>
<keyword id="KW-0805">Transcription regulation</keyword>
<gene>
    <name evidence="1" type="primary">malT</name>
    <name type="ordered locus">Ecok1_33880</name>
    <name type="ORF">APECO1_3048</name>
</gene>
<comment type="function">
    <text evidence="1">Positively regulates the transcription of the maltose regulon whose gene products are responsible for uptake and catabolism of malto-oligosaccharides. Specifically binds to the promoter region of its target genes, recognizing a short DNA motif called the MalT box.</text>
</comment>
<comment type="activity regulation">
    <text evidence="1">Activated by ATP and maltotriose, which are both required for DNA binding.</text>
</comment>
<comment type="subunit">
    <text evidence="1">Monomer in solution. Oligomerizes to an active state in the presence of the positive effectors ATP and maltotriose.</text>
</comment>
<comment type="similarity">
    <text evidence="1">Belongs to the MalT family.</text>
</comment>
<accession>A1AGU2</accession>
<proteinExistence type="inferred from homology"/>
<feature type="chain" id="PRO_1000085767" description="HTH-type transcriptional regulator MalT">
    <location>
        <begin position="1"/>
        <end position="901"/>
    </location>
</feature>
<feature type="domain" description="HTH luxR-type" evidence="1">
    <location>
        <begin position="829"/>
        <end position="894"/>
    </location>
</feature>
<feature type="DNA-binding region" description="H-T-H motif" evidence="1">
    <location>
        <begin position="853"/>
        <end position="872"/>
    </location>
</feature>
<feature type="binding site" evidence="1">
    <location>
        <begin position="39"/>
        <end position="46"/>
    </location>
    <ligand>
        <name>ATP</name>
        <dbReference type="ChEBI" id="CHEBI:30616"/>
    </ligand>
</feature>
<evidence type="ECO:0000255" key="1">
    <source>
        <dbReference type="HAMAP-Rule" id="MF_01247"/>
    </source>
</evidence>
<organism>
    <name type="scientific">Escherichia coli O1:K1 / APEC</name>
    <dbReference type="NCBI Taxonomy" id="405955"/>
    <lineage>
        <taxon>Bacteria</taxon>
        <taxon>Pseudomonadati</taxon>
        <taxon>Pseudomonadota</taxon>
        <taxon>Gammaproteobacteria</taxon>
        <taxon>Enterobacterales</taxon>
        <taxon>Enterobacteriaceae</taxon>
        <taxon>Escherichia</taxon>
    </lineage>
</organism>
<name>MALT_ECOK1</name>
<reference key="1">
    <citation type="journal article" date="2007" name="J. Bacteriol.">
        <title>The genome sequence of avian pathogenic Escherichia coli strain O1:K1:H7 shares strong similarities with human extraintestinal pathogenic E. coli genomes.</title>
        <authorList>
            <person name="Johnson T.J."/>
            <person name="Kariyawasam S."/>
            <person name="Wannemuehler Y."/>
            <person name="Mangiamele P."/>
            <person name="Johnson S.J."/>
            <person name="Doetkott C."/>
            <person name="Skyberg J.A."/>
            <person name="Lynne A.M."/>
            <person name="Johnson J.R."/>
            <person name="Nolan L.K."/>
        </authorList>
    </citation>
    <scope>NUCLEOTIDE SEQUENCE [LARGE SCALE GENOMIC DNA]</scope>
</reference>
<dbReference type="EMBL" id="CP000468">
    <property type="protein sequence ID" value="ABJ02882.1"/>
    <property type="molecule type" value="Genomic_DNA"/>
</dbReference>
<dbReference type="RefSeq" id="WP_000906972.1">
    <property type="nucleotide sequence ID" value="NZ_CADILS010000030.1"/>
</dbReference>
<dbReference type="SMR" id="A1AGU2"/>
<dbReference type="KEGG" id="ecv:APECO1_3048"/>
<dbReference type="HOGENOM" id="CLU_006325_3_0_6"/>
<dbReference type="Proteomes" id="UP000008216">
    <property type="component" value="Chromosome"/>
</dbReference>
<dbReference type="GO" id="GO:0005524">
    <property type="term" value="F:ATP binding"/>
    <property type="evidence" value="ECO:0007669"/>
    <property type="project" value="UniProtKB-UniRule"/>
</dbReference>
<dbReference type="GO" id="GO:0003677">
    <property type="term" value="F:DNA binding"/>
    <property type="evidence" value="ECO:0007669"/>
    <property type="project" value="UniProtKB-KW"/>
</dbReference>
<dbReference type="GO" id="GO:0003700">
    <property type="term" value="F:DNA-binding transcription factor activity"/>
    <property type="evidence" value="ECO:0007669"/>
    <property type="project" value="UniProtKB-UniRule"/>
</dbReference>
<dbReference type="GO" id="GO:0045913">
    <property type="term" value="P:positive regulation of carbohydrate metabolic process"/>
    <property type="evidence" value="ECO:0007669"/>
    <property type="project" value="UniProtKB-UniRule"/>
</dbReference>
<dbReference type="GO" id="GO:0045893">
    <property type="term" value="P:positive regulation of DNA-templated transcription"/>
    <property type="evidence" value="ECO:0007669"/>
    <property type="project" value="UniProtKB-UniRule"/>
</dbReference>
<dbReference type="CDD" id="cd06170">
    <property type="entry name" value="LuxR_C_like"/>
    <property type="match status" value="1"/>
</dbReference>
<dbReference type="FunFam" id="1.10.10.10:FF:000115">
    <property type="entry name" value="HTH-type transcriptional regulator MalT"/>
    <property type="match status" value="1"/>
</dbReference>
<dbReference type="FunFam" id="1.25.40.10:FF:000086">
    <property type="entry name" value="HTH-type transcriptional regulator MalT"/>
    <property type="match status" value="1"/>
</dbReference>
<dbReference type="Gene3D" id="3.40.50.300">
    <property type="entry name" value="P-loop containing nucleotide triphosphate hydrolases"/>
    <property type="match status" value="1"/>
</dbReference>
<dbReference type="Gene3D" id="1.25.40.10">
    <property type="entry name" value="Tetratricopeptide repeat domain"/>
    <property type="match status" value="1"/>
</dbReference>
<dbReference type="Gene3D" id="1.10.10.10">
    <property type="entry name" value="Winged helix-like DNA-binding domain superfamily/Winged helix DNA-binding domain"/>
    <property type="match status" value="1"/>
</dbReference>
<dbReference type="HAMAP" id="MF_01247">
    <property type="entry name" value="HTH_type_MalT"/>
    <property type="match status" value="1"/>
</dbReference>
<dbReference type="InterPro" id="IPR027417">
    <property type="entry name" value="P-loop_NTPase"/>
</dbReference>
<dbReference type="InterPro" id="IPR016032">
    <property type="entry name" value="Sig_transdc_resp-reg_C-effctor"/>
</dbReference>
<dbReference type="InterPro" id="IPR011990">
    <property type="entry name" value="TPR-like_helical_dom_sf"/>
</dbReference>
<dbReference type="InterPro" id="IPR041617">
    <property type="entry name" value="TPR_MalT"/>
</dbReference>
<dbReference type="InterPro" id="IPR023768">
    <property type="entry name" value="Tscrpt_reg_HTH_MalT"/>
</dbReference>
<dbReference type="InterPro" id="IPR000792">
    <property type="entry name" value="Tscrpt_reg_LuxR_C"/>
</dbReference>
<dbReference type="InterPro" id="IPR036388">
    <property type="entry name" value="WH-like_DNA-bd_sf"/>
</dbReference>
<dbReference type="NCBIfam" id="NF003420">
    <property type="entry name" value="PRK04841.1"/>
    <property type="match status" value="1"/>
</dbReference>
<dbReference type="PANTHER" id="PTHR44688">
    <property type="entry name" value="DNA-BINDING TRANSCRIPTIONAL ACTIVATOR DEVR_DOSR"/>
    <property type="match status" value="1"/>
</dbReference>
<dbReference type="PANTHER" id="PTHR44688:SF16">
    <property type="entry name" value="DNA-BINDING TRANSCRIPTIONAL ACTIVATOR DEVR_DOSR"/>
    <property type="match status" value="1"/>
</dbReference>
<dbReference type="Pfam" id="PF00196">
    <property type="entry name" value="GerE"/>
    <property type="match status" value="1"/>
</dbReference>
<dbReference type="Pfam" id="PF17874">
    <property type="entry name" value="TPR_MalT"/>
    <property type="match status" value="1"/>
</dbReference>
<dbReference type="PRINTS" id="PR00038">
    <property type="entry name" value="HTHLUXR"/>
</dbReference>
<dbReference type="SMART" id="SM00421">
    <property type="entry name" value="HTH_LUXR"/>
    <property type="match status" value="1"/>
</dbReference>
<dbReference type="SUPFAM" id="SSF46894">
    <property type="entry name" value="C-terminal effector domain of the bipartite response regulators"/>
    <property type="match status" value="1"/>
</dbReference>
<dbReference type="SUPFAM" id="SSF52540">
    <property type="entry name" value="P-loop containing nucleoside triphosphate hydrolases"/>
    <property type="match status" value="1"/>
</dbReference>
<dbReference type="SUPFAM" id="SSF48452">
    <property type="entry name" value="TPR-like"/>
    <property type="match status" value="1"/>
</dbReference>
<dbReference type="PROSITE" id="PS00622">
    <property type="entry name" value="HTH_LUXR_1"/>
    <property type="match status" value="1"/>
</dbReference>
<dbReference type="PROSITE" id="PS50043">
    <property type="entry name" value="HTH_LUXR_2"/>
    <property type="match status" value="1"/>
</dbReference>
<sequence>MLIPSKLSRPVRLDHTVVRERLLAKLSGANNFRLALITSPAGYGKTTLISQWAAGKNDIGWYSLDEGDNQQERFASYLIAAVQQATNGHCAICETMAQKRQYASLTSLFAQLFIELAEWHSPLYLVIDDYHLITNPVIHESMRFFIRHQPENLTLVVLSRNLPQLGIANLRVRDQLLEIGSQQLAFTHQEAKQFFDCRLSSPIEAAESSRICDDVSGWATALQLIALSARQNTHSAHKSARRLAGINASHLSDYLVDEVLDNVDLATRHFLLKSAILRSMNDALITRVTGEENGQMRLEEIERQGLFLQRMDDTGEWFCYHPLFGNFLRQRCQWELAAELPEIHRAAAESWMAQGFPSEAIHHALAAGDALMLRDILLNHAWSLFNHSELSLLEESLKALPWDSLLENPQLVLLQAWLMQSQHRYGEVNTLLARAEHEIKDIREGTMHAEFNALRAQVAINDGNPDEAERLAKLALEELPPGWFYSRIVATSVLGEVLHCKGELTRSLALMQQTEQMARQHDVWHYALWSLIQQSEILFAQGFLQTAWETQEKAFQLINEQHLEQLPMHEFLVRIRAQLLWAWARLDEAEASARSGIEVLSSYQPQQQLQCLAMLIQCSLARGDLDNARSQLNRLENLLGNGKYHSDWISNANKVRVIYWQMTGDKAAAANWLRHTAKPEFANNHFLQGQWRNIARAQILLGEFESAEIVLEELNENARSLRLMSDLNRNLLLLNQLYWQAGRKSDAQRVLLDALKLANRTGFISHFVIEGEAMAQQLRQLIQLNTLPELEQHRAQRILREINQHHRHKFAHFDENFVERLLNHPEVPELIRTSPLTQREWQVLGLIYSGYSNEQIAGELEVAATTIKTHIRNLYQKLGVAHRQAAVQHAQKLLKMMGYGV</sequence>
<protein>
    <recommendedName>
        <fullName evidence="1">HTH-type transcriptional regulator MalT</fullName>
    </recommendedName>
    <alternativeName>
        <fullName evidence="1">ATP-dependent transcriptional activator MalT</fullName>
    </alternativeName>
</protein>